<sequence>MRMSCNGCRVLRKGCSENCSIRPCLQWIKSAESQANATVFLAKFYGRAGLMNLLNTGPDHLRPAIFRSLLYEACGRIVNPIYGSVGLLWSGNWHLCQAAVEAVMRGSPVTPIACDAAVTGQAPPFNNKLCDIRHVSSRDENVKRRSRGACKEERNVRSLSHESSLSHESPVSSEETTTEEPKTWIGLELTLGLEPLARGNHVVVPMKKRKLERCGTSEDEDTCKIELGLVCSE</sequence>
<keyword id="KW-1185">Reference proteome</keyword>
<protein>
    <recommendedName>
        <fullName>LOB domain-containing protein 40</fullName>
    </recommendedName>
    <alternativeName>
        <fullName>ASYMMETRIC LEAVES 2-like protein 37</fullName>
        <shortName>AS2-like protein 37</shortName>
    </alternativeName>
</protein>
<organism>
    <name type="scientific">Arabidopsis thaliana</name>
    <name type="common">Mouse-ear cress</name>
    <dbReference type="NCBI Taxonomy" id="3702"/>
    <lineage>
        <taxon>Eukaryota</taxon>
        <taxon>Viridiplantae</taxon>
        <taxon>Streptophyta</taxon>
        <taxon>Embryophyta</taxon>
        <taxon>Tracheophyta</taxon>
        <taxon>Spermatophyta</taxon>
        <taxon>Magnoliopsida</taxon>
        <taxon>eudicotyledons</taxon>
        <taxon>Gunneridae</taxon>
        <taxon>Pentapetalae</taxon>
        <taxon>rosids</taxon>
        <taxon>malvids</taxon>
        <taxon>Brassicales</taxon>
        <taxon>Brassicaceae</taxon>
        <taxon>Camelineae</taxon>
        <taxon>Arabidopsis</taxon>
    </lineage>
</organism>
<accession>Q9ZW96</accession>
<accession>B7XG91</accession>
<accession>Q0WN06</accession>
<accession>Q53XE6</accession>
<reference key="1">
    <citation type="journal article" date="2009" name="Plant J.">
        <title>Characterization of genes in the ASYMMETRIC LEAVES2/LATERAL ORGAN BOUNDARIES (AS2/LOB) family in Arabidopsis thaliana, and functional and molecular comparisons between AS2 and other family members.</title>
        <authorList>
            <person name="Matsumura Y."/>
            <person name="Iwakawa H."/>
            <person name="Machida Y."/>
            <person name="Machida C."/>
        </authorList>
    </citation>
    <scope>NUCLEOTIDE SEQUENCE [MRNA]</scope>
    <source>
        <strain>cv. Columbia</strain>
    </source>
</reference>
<reference key="2">
    <citation type="journal article" date="2000" name="Nature">
        <title>Sequence and analysis of chromosome 1 of the plant Arabidopsis thaliana.</title>
        <authorList>
            <person name="Theologis A."/>
            <person name="Ecker J.R."/>
            <person name="Palm C.J."/>
            <person name="Federspiel N.A."/>
            <person name="Kaul S."/>
            <person name="White O."/>
            <person name="Alonso J."/>
            <person name="Altafi H."/>
            <person name="Araujo R."/>
            <person name="Bowman C.L."/>
            <person name="Brooks S.Y."/>
            <person name="Buehler E."/>
            <person name="Chan A."/>
            <person name="Chao Q."/>
            <person name="Chen H."/>
            <person name="Cheuk R.F."/>
            <person name="Chin C.W."/>
            <person name="Chung M.K."/>
            <person name="Conn L."/>
            <person name="Conway A.B."/>
            <person name="Conway A.R."/>
            <person name="Creasy T.H."/>
            <person name="Dewar K."/>
            <person name="Dunn P."/>
            <person name="Etgu P."/>
            <person name="Feldblyum T.V."/>
            <person name="Feng J.-D."/>
            <person name="Fong B."/>
            <person name="Fujii C.Y."/>
            <person name="Gill J.E."/>
            <person name="Goldsmith A.D."/>
            <person name="Haas B."/>
            <person name="Hansen N.F."/>
            <person name="Hughes B."/>
            <person name="Huizar L."/>
            <person name="Hunter J.L."/>
            <person name="Jenkins J."/>
            <person name="Johnson-Hopson C."/>
            <person name="Khan S."/>
            <person name="Khaykin E."/>
            <person name="Kim C.J."/>
            <person name="Koo H.L."/>
            <person name="Kremenetskaia I."/>
            <person name="Kurtz D.B."/>
            <person name="Kwan A."/>
            <person name="Lam B."/>
            <person name="Langin-Hooper S."/>
            <person name="Lee A."/>
            <person name="Lee J.M."/>
            <person name="Lenz C.A."/>
            <person name="Li J.H."/>
            <person name="Li Y.-P."/>
            <person name="Lin X."/>
            <person name="Liu S.X."/>
            <person name="Liu Z.A."/>
            <person name="Luros J.S."/>
            <person name="Maiti R."/>
            <person name="Marziali A."/>
            <person name="Militscher J."/>
            <person name="Miranda M."/>
            <person name="Nguyen M."/>
            <person name="Nierman W.C."/>
            <person name="Osborne B.I."/>
            <person name="Pai G."/>
            <person name="Peterson J."/>
            <person name="Pham P.K."/>
            <person name="Rizzo M."/>
            <person name="Rooney T."/>
            <person name="Rowley D."/>
            <person name="Sakano H."/>
            <person name="Salzberg S.L."/>
            <person name="Schwartz J.R."/>
            <person name="Shinn P."/>
            <person name="Southwick A.M."/>
            <person name="Sun H."/>
            <person name="Tallon L.J."/>
            <person name="Tambunga G."/>
            <person name="Toriumi M.J."/>
            <person name="Town C.D."/>
            <person name="Utterback T."/>
            <person name="Van Aken S."/>
            <person name="Vaysberg M."/>
            <person name="Vysotskaia V.S."/>
            <person name="Walker M."/>
            <person name="Wu D."/>
            <person name="Yu G."/>
            <person name="Fraser C.M."/>
            <person name="Venter J.C."/>
            <person name="Davis R.W."/>
        </authorList>
    </citation>
    <scope>NUCLEOTIDE SEQUENCE [LARGE SCALE GENOMIC DNA]</scope>
    <source>
        <strain>cv. Columbia</strain>
    </source>
</reference>
<reference key="3">
    <citation type="journal article" date="2017" name="Plant J.">
        <title>Araport11: a complete reannotation of the Arabidopsis thaliana reference genome.</title>
        <authorList>
            <person name="Cheng C.Y."/>
            <person name="Krishnakumar V."/>
            <person name="Chan A.P."/>
            <person name="Thibaud-Nissen F."/>
            <person name="Schobel S."/>
            <person name="Town C.D."/>
        </authorList>
    </citation>
    <scope>GENOME REANNOTATION</scope>
    <source>
        <strain>cv. Columbia</strain>
    </source>
</reference>
<reference key="4">
    <citation type="submission" date="2004-02" db="EMBL/GenBank/DDBJ databases">
        <title>Arabidopsis ORF clones.</title>
        <authorList>
            <person name="Kim C.J."/>
            <person name="Chen H."/>
            <person name="Cheuk R.F."/>
            <person name="Shinn P."/>
            <person name="Ecker J.R."/>
        </authorList>
    </citation>
    <scope>NUCLEOTIDE SEQUENCE [LARGE SCALE MRNA]</scope>
    <source>
        <strain>cv. Columbia</strain>
    </source>
</reference>
<reference key="5">
    <citation type="submission" date="2006-07" db="EMBL/GenBank/DDBJ databases">
        <title>Large-scale analysis of RIKEN Arabidopsis full-length (RAFL) cDNAs.</title>
        <authorList>
            <person name="Totoki Y."/>
            <person name="Seki M."/>
            <person name="Ishida J."/>
            <person name="Nakajima M."/>
            <person name="Enju A."/>
            <person name="Kamiya A."/>
            <person name="Narusaka M."/>
            <person name="Shin-i T."/>
            <person name="Nakagawa M."/>
            <person name="Sakamoto N."/>
            <person name="Oishi K."/>
            <person name="Kohara Y."/>
            <person name="Kobayashi M."/>
            <person name="Toyoda A."/>
            <person name="Sakaki Y."/>
            <person name="Sakurai T."/>
            <person name="Iida K."/>
            <person name="Akiyama K."/>
            <person name="Satou M."/>
            <person name="Toyoda T."/>
            <person name="Konagaya A."/>
            <person name="Carninci P."/>
            <person name="Kawai J."/>
            <person name="Hayashizaki Y."/>
            <person name="Shinozaki K."/>
        </authorList>
    </citation>
    <scope>NUCLEOTIDE SEQUENCE [LARGE SCALE MRNA]</scope>
    <source>
        <strain>cv. Columbia</strain>
    </source>
</reference>
<reference key="6">
    <citation type="journal article" date="2002" name="Plant Physiol.">
        <title>The LATERAL ORGAN BOUNDARIES gene defines a novel, plant-specific gene family.</title>
        <authorList>
            <person name="Shuai B."/>
            <person name="Reynaga-Pena C.G."/>
            <person name="Springer P.S."/>
        </authorList>
    </citation>
    <scope>TISSUE SPECIFICITY</scope>
    <scope>GENE FAMILY</scope>
    <scope>NOMENCLATURE</scope>
</reference>
<reference key="7">
    <citation type="journal article" date="2002" name="Plant Cell Physiol.">
        <title>The ASYMMETRIC LEAVES2 gene of Arabidopsis thaliana, required for formation of a symmetric flat leaf lamina, encodes a member of a novel family of proteins characterized by cysteine repeats and a leucine zipper.</title>
        <authorList>
            <person name="Iwakawa H."/>
            <person name="Ueno Y."/>
            <person name="Semiarti E."/>
            <person name="Onouchi H."/>
            <person name="Kojima S."/>
            <person name="Tsukaya H."/>
            <person name="Hasebe M."/>
            <person name="Soma T."/>
            <person name="Ikezaki M."/>
            <person name="Machida C."/>
            <person name="Machida Y."/>
        </authorList>
    </citation>
    <scope>GENE FAMILY</scope>
    <scope>NOMENCLATURE</scope>
</reference>
<name>LBD40_ARATH</name>
<feature type="chain" id="PRO_0000132290" description="LOB domain-containing protein 40">
    <location>
        <begin position="1"/>
        <end position="233"/>
    </location>
</feature>
<feature type="domain" description="LOB" evidence="1">
    <location>
        <begin position="3"/>
        <end position="109"/>
    </location>
</feature>
<feature type="region of interest" description="Disordered" evidence="2">
    <location>
        <begin position="143"/>
        <end position="183"/>
    </location>
</feature>
<feature type="compositionally biased region" description="Basic and acidic residues" evidence="2">
    <location>
        <begin position="143"/>
        <end position="160"/>
    </location>
</feature>
<feature type="compositionally biased region" description="Low complexity" evidence="2">
    <location>
        <begin position="161"/>
        <end position="175"/>
    </location>
</feature>
<feature type="sequence conflict" description="In Ref. 5; BAF01494." evidence="4" ref="5">
    <original>E</original>
    <variation>G</variation>
    <location>
        <position position="152"/>
    </location>
</feature>
<gene>
    <name type="primary">LBD40</name>
    <name type="synonym">ASL37</name>
    <name type="ordered locus">At1g67100</name>
    <name type="ORF">F5A8.2</name>
</gene>
<evidence type="ECO:0000255" key="1">
    <source>
        <dbReference type="PROSITE-ProRule" id="PRU00291"/>
    </source>
</evidence>
<evidence type="ECO:0000256" key="2">
    <source>
        <dbReference type="SAM" id="MobiDB-lite"/>
    </source>
</evidence>
<evidence type="ECO:0000269" key="3">
    <source>
    </source>
</evidence>
<evidence type="ECO:0000305" key="4"/>
<dbReference type="EMBL" id="AB473870">
    <property type="protein sequence ID" value="BAH10581.1"/>
    <property type="molecule type" value="mRNA"/>
</dbReference>
<dbReference type="EMBL" id="AC004146">
    <property type="protein sequence ID" value="AAD10658.1"/>
    <property type="molecule type" value="Genomic_DNA"/>
</dbReference>
<dbReference type="EMBL" id="CP002684">
    <property type="protein sequence ID" value="AEE34596.1"/>
    <property type="molecule type" value="Genomic_DNA"/>
</dbReference>
<dbReference type="EMBL" id="BT010943">
    <property type="protein sequence ID" value="AAR24721.1"/>
    <property type="molecule type" value="mRNA"/>
</dbReference>
<dbReference type="EMBL" id="BT011650">
    <property type="protein sequence ID" value="AAS47656.1"/>
    <property type="molecule type" value="mRNA"/>
</dbReference>
<dbReference type="EMBL" id="AK229650">
    <property type="protein sequence ID" value="BAF01494.1"/>
    <property type="molecule type" value="mRNA"/>
</dbReference>
<dbReference type="PIR" id="H96694">
    <property type="entry name" value="H96694"/>
</dbReference>
<dbReference type="RefSeq" id="NP_176881.1">
    <property type="nucleotide sequence ID" value="NM_105380.5"/>
</dbReference>
<dbReference type="SMR" id="Q9ZW96"/>
<dbReference type="BioGRID" id="28251">
    <property type="interactions" value="11"/>
</dbReference>
<dbReference type="IntAct" id="Q9ZW96">
    <property type="interactions" value="9"/>
</dbReference>
<dbReference type="STRING" id="3702.Q9ZW96"/>
<dbReference type="PaxDb" id="3702-AT1G67100.1"/>
<dbReference type="ProteomicsDB" id="237125"/>
<dbReference type="EnsemblPlants" id="AT1G67100.1">
    <property type="protein sequence ID" value="AT1G67100.1"/>
    <property type="gene ID" value="AT1G67100"/>
</dbReference>
<dbReference type="GeneID" id="843030"/>
<dbReference type="Gramene" id="AT1G67100.1">
    <property type="protein sequence ID" value="AT1G67100.1"/>
    <property type="gene ID" value="AT1G67100"/>
</dbReference>
<dbReference type="KEGG" id="ath:AT1G67100"/>
<dbReference type="Araport" id="AT1G67100"/>
<dbReference type="TAIR" id="AT1G67100">
    <property type="gene designation" value="LBD40"/>
</dbReference>
<dbReference type="eggNOG" id="ENOG502QV9P">
    <property type="taxonomic scope" value="Eukaryota"/>
</dbReference>
<dbReference type="HOGENOM" id="CLU_054665_0_0_1"/>
<dbReference type="InParanoid" id="Q9ZW96"/>
<dbReference type="OMA" id="GACKMEL"/>
<dbReference type="OrthoDB" id="1922547at2759"/>
<dbReference type="PhylomeDB" id="Q9ZW96"/>
<dbReference type="PRO" id="PR:Q9ZW96"/>
<dbReference type="Proteomes" id="UP000006548">
    <property type="component" value="Chromosome 1"/>
</dbReference>
<dbReference type="ExpressionAtlas" id="Q9ZW96">
    <property type="expression patterns" value="baseline and differential"/>
</dbReference>
<dbReference type="GO" id="GO:0009739">
    <property type="term" value="P:response to gibberellin"/>
    <property type="evidence" value="ECO:0000270"/>
    <property type="project" value="TAIR"/>
</dbReference>
<dbReference type="InterPro" id="IPR004883">
    <property type="entry name" value="LOB"/>
</dbReference>
<dbReference type="InterPro" id="IPR017414">
    <property type="entry name" value="LOBD"/>
</dbReference>
<dbReference type="PANTHER" id="PTHR31304">
    <property type="entry name" value="LOB DOMAIN-CONTAINING PROTEIN 38"/>
    <property type="match status" value="1"/>
</dbReference>
<dbReference type="PANTHER" id="PTHR31304:SF9">
    <property type="entry name" value="LOB DOMAIN-CONTAINING PROTEIN 40"/>
    <property type="match status" value="1"/>
</dbReference>
<dbReference type="Pfam" id="PF03195">
    <property type="entry name" value="LOB"/>
    <property type="match status" value="1"/>
</dbReference>
<dbReference type="PIRSF" id="PIRSF038155">
    <property type="entry name" value="Protein_ASYMMETRIC_LEAVES"/>
    <property type="match status" value="1"/>
</dbReference>
<dbReference type="PROSITE" id="PS50891">
    <property type="entry name" value="LOB"/>
    <property type="match status" value="1"/>
</dbReference>
<comment type="tissue specificity">
    <text evidence="3">Expressed in roots and flowers.</text>
</comment>
<comment type="similarity">
    <text evidence="4">Belongs to the LOB domain-containing protein family.</text>
</comment>
<proteinExistence type="evidence at transcript level"/>